<gene>
    <name type="primary">E4</name>
</gene>
<comment type="function">
    <text evidence="1">Contributes to multiple aspects of the viral life cycle including viral genome amplification, suppression of suprabasal cell differentiation and egress of newly formed virions. Induces host cell cycle arrest at the G2 phase by associating with and preventing the nuclear entry of host CDK1/cyclin B1 complexes. Inhibits cellular DNA replication by preventing loading of host replication licensing proteins MCM2 and MCM7 onto chromatin. Within the cytoplasm, associates with host kinase SRPK1, a splicing factor regulator, and inhibits its activity. Therefore, E4 favors expression of late viral transcripts by inhibiting SRPK1-mediated phosphorylation of host serine-arginine (SR) proteins that have critical roles in mRNA metabolism. Late in the infectious cycle, E4 also acts to diminish the integrity of the keratinocyte by disrupting the keratin cytoskeleton and inducing apoptosis through alteration of mitochondrial function to facilitate egress of the newly formed virions.</text>
</comment>
<comment type="subunit">
    <text evidence="1">Assembles into oligomeric complexes. Interacts with host CDK1. Interacts with host SRPK1; this interaction may favor expression of late viral transcripts. Interacts with host cytokeratin components KRT8 and KRT18.</text>
</comment>
<comment type="subcellular location">
    <subcellularLocation>
        <location evidence="1">Host cytoplasm</location>
    </subcellularLocation>
    <subcellularLocation>
        <location evidence="1">Host nucleus</location>
    </subcellularLocation>
</comment>
<comment type="PTM">
    <text evidence="1">Phosphorylated by host ERK. The phosphorylation triggers a structural change that enhances keratin binding and protein stability.</text>
</comment>
<comment type="miscellaneous">
    <text evidence="1">The major E4 form is first synthesized as an E1^E4 fusion protein from spliced E1^E4 transcripts, such that the first few amino acids of the E4 protein are derived from the N terminus of E1.</text>
</comment>
<comment type="similarity">
    <text evidence="3">Belongs to the papillomaviridae E4 protein family.</text>
</comment>
<organismHost>
    <name type="scientific">Homo sapiens</name>
    <name type="common">Human</name>
    <dbReference type="NCBI Taxonomy" id="9606"/>
</organismHost>
<name>VE4_HPV42</name>
<proteinExistence type="inferred from homology"/>
<organism>
    <name type="scientific">Human papillomavirus 42</name>
    <dbReference type="NCBI Taxonomy" id="10590"/>
    <lineage>
        <taxon>Viruses</taxon>
        <taxon>Monodnaviria</taxon>
        <taxon>Shotokuvirae</taxon>
        <taxon>Cossaviricota</taxon>
        <taxon>Papovaviricetes</taxon>
        <taxon>Zurhausenvirales</taxon>
        <taxon>Papillomaviridae</taxon>
        <taxon>Firstpapillomavirinae</taxon>
        <taxon>Alphapapillomavirus</taxon>
        <taxon>Alphapapillomavirus 1</taxon>
    </lineage>
</organism>
<feature type="chain" id="PRO_0000133274" description="Protein E4">
    <location>
        <begin position="1"/>
        <end position="117"/>
    </location>
</feature>
<feature type="region of interest" description="Disordered" evidence="2">
    <location>
        <begin position="31"/>
        <end position="89"/>
    </location>
</feature>
<feature type="compositionally biased region" description="Low complexity" evidence="2">
    <location>
        <begin position="31"/>
        <end position="53"/>
    </location>
</feature>
<feature type="compositionally biased region" description="Basic and acidic residues" evidence="2">
    <location>
        <begin position="60"/>
        <end position="71"/>
    </location>
</feature>
<evidence type="ECO:0000250" key="1">
    <source>
        <dbReference type="UniProtKB" id="P06922"/>
    </source>
</evidence>
<evidence type="ECO:0000256" key="2">
    <source>
        <dbReference type="SAM" id="MobiDB-lite"/>
    </source>
</evidence>
<evidence type="ECO:0000305" key="3"/>
<dbReference type="EMBL" id="M73236">
    <property type="protein sequence ID" value="AAA47045.1"/>
    <property type="status" value="ALT_SEQ"/>
    <property type="molecule type" value="Genomic_DNA"/>
</dbReference>
<dbReference type="PIR" id="C39451">
    <property type="entry name" value="W4WL42"/>
</dbReference>
<dbReference type="Proteomes" id="UP000009122">
    <property type="component" value="Genome"/>
</dbReference>
<dbReference type="GO" id="GO:0030430">
    <property type="term" value="C:host cell cytoplasm"/>
    <property type="evidence" value="ECO:0007669"/>
    <property type="project" value="UniProtKB-SubCell"/>
</dbReference>
<dbReference type="GO" id="GO:0042025">
    <property type="term" value="C:host cell nucleus"/>
    <property type="evidence" value="ECO:0007669"/>
    <property type="project" value="UniProtKB-SubCell"/>
</dbReference>
<dbReference type="GO" id="GO:0039592">
    <property type="term" value="P:symbiont-mediated arrest of host cell cycle during G2/M transition"/>
    <property type="evidence" value="ECO:0007669"/>
    <property type="project" value="UniProtKB-KW"/>
</dbReference>
<dbReference type="InterPro" id="IPR003861">
    <property type="entry name" value="Papilloma_E4"/>
</dbReference>
<dbReference type="Pfam" id="PF02711">
    <property type="entry name" value="Pap_E4"/>
    <property type="match status" value="1"/>
</dbReference>
<protein>
    <recommendedName>
        <fullName>Protein E4</fullName>
    </recommendedName>
</protein>
<keyword id="KW-0244">Early protein</keyword>
<keyword id="KW-1035">Host cytoplasm</keyword>
<keyword id="KW-1079">Host G2/M cell cycle arrest by virus</keyword>
<keyword id="KW-1048">Host nucleus</keyword>
<keyword id="KW-0945">Host-virus interaction</keyword>
<keyword id="KW-1121">Modulation of host cell cycle by virus</keyword>
<keyword id="KW-0597">Phosphoprotein</keyword>
<accession>P27225</accession>
<sequence length="117" mass="12955">MADDTAPHPPTQRYPLLDLLSWYNKCAPQTHCTPQRPLTTTTQTVQTEQHTTCPSKPHRHENDTDSVDSRHHSTCSTQTPASPASPAHPWTLDCVGSELTVKTVTSDGTTVEVRLRL</sequence>
<reference key="1">
    <citation type="journal article" date="1992" name="Virology">
        <title>Human papillomavirus type 42: new sequences, conserved genome organization.</title>
        <authorList>
            <person name="Philipp W."/>
            <person name="Honore N."/>
            <person name="Sapp M."/>
            <person name="Cole S.T."/>
            <person name="Streeck R.E."/>
        </authorList>
    </citation>
    <scope>NUCLEOTIDE SEQUENCE [GENOMIC DNA]</scope>
</reference>